<dbReference type="EMBL" id="M15058">
    <property type="status" value="NOT_ANNOTATED_CDS"/>
    <property type="molecule type" value="Genomic_DNA"/>
</dbReference>
<dbReference type="PIR" id="A03889">
    <property type="entry name" value="QQVZ19"/>
</dbReference>
<organismHost>
    <name type="scientific">Bos taurus</name>
    <name type="common">Bovine</name>
    <dbReference type="NCBI Taxonomy" id="9913"/>
</organismHost>
<gene>
    <name type="ORF">D ORF G</name>
</gene>
<proteinExistence type="predicted"/>
<reference key="1">
    <citation type="journal article" date="1986" name="Virology">
        <title>Nucleotide sequence and genetic map of the 16-kb vaccinia virus HindIII D fragment.</title>
        <authorList>
            <person name="Niles E.G."/>
            <person name="Condit R.C."/>
            <person name="Caro P."/>
            <person name="Davidson K."/>
            <person name="Matusick L."/>
            <person name="Seto J."/>
        </authorList>
    </citation>
    <scope>NUCLEOTIDE SEQUENCE [GENOMIC DNA]</scope>
</reference>
<accession>P68484</accession>
<accession>P04315</accession>
<protein>
    <recommendedName>
        <fullName>Uncharacterized 10.4 kDa protein</fullName>
    </recommendedName>
</protein>
<name>YVDG_VACCW</name>
<feature type="chain" id="PRO_0000099697" description="Uncharacterized 10.4 kDa protein">
    <location>
        <begin position="1"/>
        <end position="90"/>
    </location>
</feature>
<sequence length="90" mass="10387">MYEHRPPSLETNSFSSTRRLFSNSDWCCKDPGRSKLTNMVNSCTLLTIGVADKQIILWFFNAMVLDKKLYTERVGRILPSSLINDLEMKL</sequence>
<organism>
    <name type="scientific">Vaccinia virus (strain Western Reserve)</name>
    <name type="common">VACV</name>
    <name type="synonym">Vaccinia virus (strain WR)</name>
    <dbReference type="NCBI Taxonomy" id="10254"/>
    <lineage>
        <taxon>Viruses</taxon>
        <taxon>Varidnaviria</taxon>
        <taxon>Bamfordvirae</taxon>
        <taxon>Nucleocytoviricota</taxon>
        <taxon>Pokkesviricetes</taxon>
        <taxon>Chitovirales</taxon>
        <taxon>Poxviridae</taxon>
        <taxon>Chordopoxvirinae</taxon>
        <taxon>Orthopoxvirus</taxon>
        <taxon>Vaccinia virus</taxon>
    </lineage>
</organism>